<comment type="function">
    <text evidence="5">Essential for late larval/early pupal development.</text>
</comment>
<comment type="interaction">
    <interactant intactId="EBI-90517">
        <id>Q86B79</id>
    </interactant>
    <interactant intactId="EBI-97141">
        <id>Q9N2M8</id>
        <label>heca</label>
    </interactant>
    <organismsDiffer>false</organismsDiffer>
    <experiments>4</experiments>
</comment>
<comment type="subcellular location">
    <subcellularLocation>
        <location evidence="5">Cytoplasm</location>
    </subcellularLocation>
</comment>
<comment type="tissue specificity">
    <text evidence="5">Ubiquitous in most somatic tissues from syncytial embryo through to embryo stage 15. Expression becomes restricted predominantly to the CNS at stages 16 and 17.</text>
</comment>
<comment type="developmental stage">
    <text evidence="5">Expressed both maternally and zygotically.</text>
</comment>
<comment type="disruption phenotype">
    <text evidence="5">Flies exhibit an 'unkempt' appearance: small rough eyes, held out wings and crossed scutellar bristles.</text>
</comment>
<comment type="similarity">
    <text evidence="7">Belongs to the unkempt family.</text>
</comment>
<comment type="sequence caution" evidence="7">
    <conflict type="erroneous initiation">
        <sequence resource="EMBL-CDS" id="AAK93256"/>
    </conflict>
</comment>
<comment type="sequence caution" evidence="7">
    <conflict type="erroneous initiation">
        <sequence resource="EMBL-CDS" id="AAX33404"/>
    </conflict>
</comment>
<comment type="sequence caution" evidence="7">
    <conflict type="erroneous initiation">
        <sequence resource="EMBL-CDS" id="CAA77616"/>
    </conflict>
</comment>
<organism evidence="8">
    <name type="scientific">Drosophila melanogaster</name>
    <name type="common">Fruit fly</name>
    <dbReference type="NCBI Taxonomy" id="7227"/>
    <lineage>
        <taxon>Eukaryota</taxon>
        <taxon>Metazoa</taxon>
        <taxon>Ecdysozoa</taxon>
        <taxon>Arthropoda</taxon>
        <taxon>Hexapoda</taxon>
        <taxon>Insecta</taxon>
        <taxon>Pterygota</taxon>
        <taxon>Neoptera</taxon>
        <taxon>Endopterygota</taxon>
        <taxon>Diptera</taxon>
        <taxon>Brachycera</taxon>
        <taxon>Muscomorpha</taxon>
        <taxon>Ephydroidea</taxon>
        <taxon>Drosophilidae</taxon>
        <taxon>Drosophila</taxon>
        <taxon>Sophophora</taxon>
    </lineage>
</organism>
<accession>Q86B79</accession>
<accession>A4V397</accession>
<accession>Q24580</accession>
<accession>Q5BIG8</accession>
<accession>Q960U9</accession>
<sequence>MLANETNKLLLSSQQEKPNHYTYLKEFRVEQCQSFLQHKCNQHRPFVCFNWHFQNQRRRRPVRKRDGTFNYSADNYCTKYDETTGICPEGDECPYLHRTAGDTERRYHLRYYKTCMCVHDTDSRGYCVKNGLHCAFAHGMQDQRPPVYDIKELETLQNAESTLDSTNALNALDKERNLMNEDPKWQDTNYVLANYKTEPCKRPPRLCRQGYACPQYHNSKDKRRSPRKYKYRSTPCPNVKHGEEWGEPGNCEAGDNCQYCHTRTEQQFHPEIYKSTKCNDVQQAGYCPRSVFCAFAHVEPCSMDDPRENSLSASLANTSLLTRSSAPINIPNTTLSNSINDFNSGSFAVNIPSSSLTYSPTNHANLFNVDAFNYGGSNKLSNSLSATQNDSSLFFPSRIISPGFGDGLSISPSVRISELNTIRDDINSSSVGNSLFENTLNTAKNAFSLQSLQSQNNSDLGRITNELLTKNAQIHKLNGRFEDMACKLKIAELHRDKAKQEAQEWKERYDLAQIQLNLPAELRDLSIQKLKQLQSKLRTDLEEVDKVLYLENAKKCMKCEENNRTVTLEPCNHLSICNTCAESVTECPYCQVPVITTHT</sequence>
<feature type="chain" id="PRO_0000056300" description="RING finger protein unkempt">
    <location>
        <begin position="1"/>
        <end position="599"/>
    </location>
</feature>
<feature type="zinc finger region" description="C3H1-type 1" evidence="2">
    <location>
        <begin position="71"/>
        <end position="100"/>
    </location>
</feature>
<feature type="zinc finger region" description="C3H1-type 2" evidence="2">
    <location>
        <begin position="111"/>
        <end position="141"/>
    </location>
</feature>
<feature type="zinc finger region" description="C3H1-type 3" evidence="2">
    <location>
        <begin position="194"/>
        <end position="220"/>
    </location>
</feature>
<feature type="zinc finger region" description="C3H1-type 4" evidence="2">
    <location>
        <begin position="230"/>
        <end position="264"/>
    </location>
</feature>
<feature type="zinc finger region" description="C3H1-type 5" evidence="2">
    <location>
        <begin position="272"/>
        <end position="300"/>
    </location>
</feature>
<feature type="zinc finger region" description="RING-type" evidence="1">
    <location>
        <begin position="556"/>
        <end position="591"/>
    </location>
</feature>
<feature type="modified residue" description="Phosphoserine" evidence="6">
    <location>
        <position position="411"/>
    </location>
</feature>
<feature type="sequence conflict" description="In Ref. 4; AAX33404." evidence="7" ref="4">
    <original>S</original>
    <variation>R</variation>
    <location>
        <position position="411"/>
    </location>
</feature>
<feature type="sequence conflict" description="In Ref. 4; AAX33404." evidence="7" ref="4">
    <original>K</original>
    <variation>E</variation>
    <location>
        <position position="558"/>
    </location>
</feature>
<evidence type="ECO:0000255" key="1">
    <source>
        <dbReference type="PROSITE-ProRule" id="PRU00175"/>
    </source>
</evidence>
<evidence type="ECO:0000255" key="2">
    <source>
        <dbReference type="PROSITE-ProRule" id="PRU00723"/>
    </source>
</evidence>
<evidence type="ECO:0000269" key="3">
    <source>
    </source>
</evidence>
<evidence type="ECO:0000269" key="4">
    <source>
    </source>
</evidence>
<evidence type="ECO:0000269" key="5">
    <source>
    </source>
</evidence>
<evidence type="ECO:0000269" key="6">
    <source>
    </source>
</evidence>
<evidence type="ECO:0000305" key="7"/>
<evidence type="ECO:0000312" key="8">
    <source>
        <dbReference type="EMBL" id="AAO41593.1"/>
    </source>
</evidence>
<keyword id="KW-0963">Cytoplasm</keyword>
<keyword id="KW-0217">Developmental protein</keyword>
<keyword id="KW-0238">DNA-binding</keyword>
<keyword id="KW-0479">Metal-binding</keyword>
<keyword id="KW-0597">Phosphoprotein</keyword>
<keyword id="KW-1185">Reference proteome</keyword>
<keyword id="KW-0677">Repeat</keyword>
<keyword id="KW-0862">Zinc</keyword>
<keyword id="KW-0863">Zinc-finger</keyword>
<name>UNK_DROME</name>
<dbReference type="EMBL" id="Z11527">
    <property type="protein sequence ID" value="CAA77616.1"/>
    <property type="status" value="ALT_INIT"/>
    <property type="molecule type" value="mRNA"/>
</dbReference>
<dbReference type="EMBL" id="AE014297">
    <property type="protein sequence ID" value="AAO41593.1"/>
    <property type="molecule type" value="Genomic_DNA"/>
</dbReference>
<dbReference type="EMBL" id="AE014297">
    <property type="protein sequence ID" value="AAO41594.1"/>
    <property type="molecule type" value="Genomic_DNA"/>
</dbReference>
<dbReference type="EMBL" id="BT021256">
    <property type="protein sequence ID" value="AAX33404.1"/>
    <property type="status" value="ALT_INIT"/>
    <property type="molecule type" value="mRNA"/>
</dbReference>
<dbReference type="EMBL" id="AY051832">
    <property type="protein sequence ID" value="AAK93256.1"/>
    <property type="status" value="ALT_INIT"/>
    <property type="molecule type" value="mRNA"/>
</dbReference>
<dbReference type="PIR" id="S42526">
    <property type="entry name" value="S42526"/>
</dbReference>
<dbReference type="RefSeq" id="NP_001247253.1">
    <property type="nucleotide sequence ID" value="NM_001260324.2"/>
</dbReference>
<dbReference type="RefSeq" id="NP_001247255.1">
    <property type="nucleotide sequence ID" value="NM_001260326.2"/>
</dbReference>
<dbReference type="RefSeq" id="NP_788722.1">
    <property type="nucleotide sequence ID" value="NM_176545.3"/>
</dbReference>
<dbReference type="RefSeq" id="NP_788723.1">
    <property type="nucleotide sequence ID" value="NM_176546.3"/>
</dbReference>
<dbReference type="SMR" id="Q86B79"/>
<dbReference type="BioGRID" id="67683">
    <property type="interactions" value="31"/>
</dbReference>
<dbReference type="DIP" id="DIP-22281N"/>
<dbReference type="FunCoup" id="Q86B79">
    <property type="interactions" value="1633"/>
</dbReference>
<dbReference type="IntAct" id="Q86B79">
    <property type="interactions" value="35"/>
</dbReference>
<dbReference type="STRING" id="7227.FBpp0312602"/>
<dbReference type="iPTMnet" id="Q86B79"/>
<dbReference type="ABCD" id="Q86B79">
    <property type="antibodies" value="5 sequenced antibodies"/>
</dbReference>
<dbReference type="DNASU" id="42738"/>
<dbReference type="EnsemblMetazoa" id="FBtr0084402">
    <property type="protein sequence ID" value="FBpp0083794"/>
    <property type="gene ID" value="FBgn0004395"/>
</dbReference>
<dbReference type="EnsemblMetazoa" id="FBtr0084403">
    <property type="protein sequence ID" value="FBpp0083795"/>
    <property type="gene ID" value="FBgn0004395"/>
</dbReference>
<dbReference type="EnsemblMetazoa" id="FBtr0305571">
    <property type="protein sequence ID" value="FBpp0294022"/>
    <property type="gene ID" value="FBgn0004395"/>
</dbReference>
<dbReference type="EnsemblMetazoa" id="FBtr0305573">
    <property type="protein sequence ID" value="FBpp0294024"/>
    <property type="gene ID" value="FBgn0004395"/>
</dbReference>
<dbReference type="GeneID" id="42738"/>
<dbReference type="KEGG" id="dme:Dmel_CG4620"/>
<dbReference type="UCSC" id="CG4620-RA">
    <property type="organism name" value="d. melanogaster"/>
</dbReference>
<dbReference type="AGR" id="FB:FBgn0004395"/>
<dbReference type="CTD" id="85451"/>
<dbReference type="FlyBase" id="FBgn0004395">
    <property type="gene designation" value="unk"/>
</dbReference>
<dbReference type="VEuPathDB" id="VectorBase:FBgn0004395"/>
<dbReference type="GeneTree" id="ENSGT00940000169050"/>
<dbReference type="InParanoid" id="Q86B79"/>
<dbReference type="OrthoDB" id="20534at2759"/>
<dbReference type="PhylomeDB" id="Q86B79"/>
<dbReference type="Reactome" id="R-DME-983168">
    <property type="pathway name" value="Antigen processing: Ubiquitination &amp; Proteasome degradation"/>
</dbReference>
<dbReference type="SignaLink" id="Q86B79"/>
<dbReference type="BioGRID-ORCS" id="42738">
    <property type="hits" value="0 hits in 3 CRISPR screens"/>
</dbReference>
<dbReference type="GenomeRNAi" id="42738"/>
<dbReference type="PRO" id="PR:Q86B79"/>
<dbReference type="Proteomes" id="UP000000803">
    <property type="component" value="Chromosome 3R"/>
</dbReference>
<dbReference type="Bgee" id="FBgn0004395">
    <property type="expression patterns" value="Expressed in distal medullary amacrine neuron Dm3 (Drosophila) in insect head and 274 other cell types or tissues"/>
</dbReference>
<dbReference type="ExpressionAtlas" id="Q86B79">
    <property type="expression patterns" value="baseline and differential"/>
</dbReference>
<dbReference type="GO" id="GO:0005737">
    <property type="term" value="C:cytoplasm"/>
    <property type="evidence" value="ECO:0000314"/>
    <property type="project" value="UniProtKB"/>
</dbReference>
<dbReference type="GO" id="GO:0003677">
    <property type="term" value="F:DNA binding"/>
    <property type="evidence" value="ECO:0000303"/>
    <property type="project" value="UniProtKB"/>
</dbReference>
<dbReference type="GO" id="GO:0008270">
    <property type="term" value="F:zinc ion binding"/>
    <property type="evidence" value="ECO:0000255"/>
    <property type="project" value="FlyBase"/>
</dbReference>
<dbReference type="GO" id="GO:0008407">
    <property type="term" value="P:chaeta morphogenesis"/>
    <property type="evidence" value="ECO:0000315"/>
    <property type="project" value="UniProtKB"/>
</dbReference>
<dbReference type="GO" id="GO:0048749">
    <property type="term" value="P:compound eye development"/>
    <property type="evidence" value="ECO:0000315"/>
    <property type="project" value="FlyBase"/>
</dbReference>
<dbReference type="GO" id="GO:0007476">
    <property type="term" value="P:imaginal disc-derived wing morphogenesis"/>
    <property type="evidence" value="ECO:0000315"/>
    <property type="project" value="UniProtKB"/>
</dbReference>
<dbReference type="GO" id="GO:0002164">
    <property type="term" value="P:larval development"/>
    <property type="evidence" value="ECO:0000315"/>
    <property type="project" value="UniProtKB"/>
</dbReference>
<dbReference type="GO" id="GO:0030182">
    <property type="term" value="P:neuron differentiation"/>
    <property type="evidence" value="ECO:0000315"/>
    <property type="project" value="FlyBase"/>
</dbReference>
<dbReference type="GO" id="GO:0050767">
    <property type="term" value="P:regulation of neurogenesis"/>
    <property type="evidence" value="ECO:0000315"/>
    <property type="project" value="FlyBase"/>
</dbReference>
<dbReference type="CDD" id="cd16614">
    <property type="entry name" value="RING-HC_UNK-like"/>
    <property type="match status" value="1"/>
</dbReference>
<dbReference type="Gene3D" id="4.10.1000.10">
    <property type="entry name" value="Zinc finger, CCCH-type"/>
    <property type="match status" value="1"/>
</dbReference>
<dbReference type="Gene3D" id="3.30.40.10">
    <property type="entry name" value="Zinc/RING finger domain, C3HC4 (zinc finger)"/>
    <property type="match status" value="1"/>
</dbReference>
<dbReference type="InterPro" id="IPR045234">
    <property type="entry name" value="Unkempt-like"/>
</dbReference>
<dbReference type="InterPro" id="IPR040594">
    <property type="entry name" value="Unkempt_Znf"/>
</dbReference>
<dbReference type="InterPro" id="IPR000571">
    <property type="entry name" value="Znf_CCCH"/>
</dbReference>
<dbReference type="InterPro" id="IPR036855">
    <property type="entry name" value="Znf_CCCH_sf"/>
</dbReference>
<dbReference type="InterPro" id="IPR001841">
    <property type="entry name" value="Znf_RING"/>
</dbReference>
<dbReference type="InterPro" id="IPR013083">
    <property type="entry name" value="Znf_RING/FYVE/PHD"/>
</dbReference>
<dbReference type="PANTHER" id="PTHR14493:SF50">
    <property type="entry name" value="RING FINGER PROTEIN UNKEMPT"/>
    <property type="match status" value="1"/>
</dbReference>
<dbReference type="PANTHER" id="PTHR14493">
    <property type="entry name" value="UNKEMPT FAMILY MEMBER"/>
    <property type="match status" value="1"/>
</dbReference>
<dbReference type="Pfam" id="PF13920">
    <property type="entry name" value="zf-C3HC4_3"/>
    <property type="match status" value="1"/>
</dbReference>
<dbReference type="Pfam" id="PF00642">
    <property type="entry name" value="zf-CCCH"/>
    <property type="match status" value="1"/>
</dbReference>
<dbReference type="Pfam" id="PF23261">
    <property type="entry name" value="zf-CCCH_11"/>
    <property type="match status" value="1"/>
</dbReference>
<dbReference type="Pfam" id="PF25427">
    <property type="entry name" value="zf-CCCH_UNK"/>
    <property type="match status" value="1"/>
</dbReference>
<dbReference type="Pfam" id="PF23035">
    <property type="entry name" value="zf-CCCH_UNK-like_4th"/>
    <property type="match status" value="1"/>
</dbReference>
<dbReference type="Pfam" id="PF18384">
    <property type="entry name" value="zf_CCCH_5"/>
    <property type="match status" value="1"/>
</dbReference>
<dbReference type="SMART" id="SM00356">
    <property type="entry name" value="ZnF_C3H1"/>
    <property type="match status" value="4"/>
</dbReference>
<dbReference type="SUPFAM" id="SSF90229">
    <property type="entry name" value="CCCH zinc finger"/>
    <property type="match status" value="1"/>
</dbReference>
<dbReference type="PROSITE" id="PS50103">
    <property type="entry name" value="ZF_C3H1"/>
    <property type="match status" value="5"/>
</dbReference>
<dbReference type="PROSITE" id="PS50089">
    <property type="entry name" value="ZF_RING_2"/>
    <property type="match status" value="1"/>
</dbReference>
<reference evidence="7" key="1">
    <citation type="journal article" date="1992" name="Genetics">
        <title>The embryonically active gene, unkempt, of Drosophila encodes a Cys3His finger protein.</title>
        <authorList>
            <person name="Mohler J."/>
            <person name="Weiss N."/>
            <person name="Murli S."/>
            <person name="Mohammadi S."/>
            <person name="Vani K."/>
            <person name="Vasilakis G."/>
            <person name="Song C.H."/>
            <person name="Epstein A."/>
            <person name="Kuang T."/>
            <person name="English J."/>
            <person name="Cherdak D."/>
        </authorList>
    </citation>
    <scope>NUCLEOTIDE SEQUENCE [MRNA]</scope>
    <scope>FUNCTION</scope>
    <scope>SUBCELLULAR LOCATION</scope>
    <scope>TISSUE SPECIFICITY</scope>
    <scope>DEVELOPMENTAL STAGE</scope>
    <scope>DISRUPTION PHENOTYPE</scope>
    <source>
        <tissue evidence="5">Embryo</tissue>
    </source>
</reference>
<reference evidence="7" key="2">
    <citation type="journal article" date="2000" name="Science">
        <title>The genome sequence of Drosophila melanogaster.</title>
        <authorList>
            <person name="Adams M.D."/>
            <person name="Celniker S.E."/>
            <person name="Holt R.A."/>
            <person name="Evans C.A."/>
            <person name="Gocayne J.D."/>
            <person name="Amanatides P.G."/>
            <person name="Scherer S.E."/>
            <person name="Li P.W."/>
            <person name="Hoskins R.A."/>
            <person name="Galle R.F."/>
            <person name="George R.A."/>
            <person name="Lewis S.E."/>
            <person name="Richards S."/>
            <person name="Ashburner M."/>
            <person name="Henderson S.N."/>
            <person name="Sutton G.G."/>
            <person name="Wortman J.R."/>
            <person name="Yandell M.D."/>
            <person name="Zhang Q."/>
            <person name="Chen L.X."/>
            <person name="Brandon R.C."/>
            <person name="Rogers Y.-H.C."/>
            <person name="Blazej R.G."/>
            <person name="Champe M."/>
            <person name="Pfeiffer B.D."/>
            <person name="Wan K.H."/>
            <person name="Doyle C."/>
            <person name="Baxter E.G."/>
            <person name="Helt G."/>
            <person name="Nelson C.R."/>
            <person name="Miklos G.L.G."/>
            <person name="Abril J.F."/>
            <person name="Agbayani A."/>
            <person name="An H.-J."/>
            <person name="Andrews-Pfannkoch C."/>
            <person name="Baldwin D."/>
            <person name="Ballew R.M."/>
            <person name="Basu A."/>
            <person name="Baxendale J."/>
            <person name="Bayraktaroglu L."/>
            <person name="Beasley E.M."/>
            <person name="Beeson K.Y."/>
            <person name="Benos P.V."/>
            <person name="Berman B.P."/>
            <person name="Bhandari D."/>
            <person name="Bolshakov S."/>
            <person name="Borkova D."/>
            <person name="Botchan M.R."/>
            <person name="Bouck J."/>
            <person name="Brokstein P."/>
            <person name="Brottier P."/>
            <person name="Burtis K.C."/>
            <person name="Busam D.A."/>
            <person name="Butler H."/>
            <person name="Cadieu E."/>
            <person name="Center A."/>
            <person name="Chandra I."/>
            <person name="Cherry J.M."/>
            <person name="Cawley S."/>
            <person name="Dahlke C."/>
            <person name="Davenport L.B."/>
            <person name="Davies P."/>
            <person name="de Pablos B."/>
            <person name="Delcher A."/>
            <person name="Deng Z."/>
            <person name="Mays A.D."/>
            <person name="Dew I."/>
            <person name="Dietz S.M."/>
            <person name="Dodson K."/>
            <person name="Doup L.E."/>
            <person name="Downes M."/>
            <person name="Dugan-Rocha S."/>
            <person name="Dunkov B.C."/>
            <person name="Dunn P."/>
            <person name="Durbin K.J."/>
            <person name="Evangelista C.C."/>
            <person name="Ferraz C."/>
            <person name="Ferriera S."/>
            <person name="Fleischmann W."/>
            <person name="Fosler C."/>
            <person name="Gabrielian A.E."/>
            <person name="Garg N.S."/>
            <person name="Gelbart W.M."/>
            <person name="Glasser K."/>
            <person name="Glodek A."/>
            <person name="Gong F."/>
            <person name="Gorrell J.H."/>
            <person name="Gu Z."/>
            <person name="Guan P."/>
            <person name="Harris M."/>
            <person name="Harris N.L."/>
            <person name="Harvey D.A."/>
            <person name="Heiman T.J."/>
            <person name="Hernandez J.R."/>
            <person name="Houck J."/>
            <person name="Hostin D."/>
            <person name="Houston K.A."/>
            <person name="Howland T.J."/>
            <person name="Wei M.-H."/>
            <person name="Ibegwam C."/>
            <person name="Jalali M."/>
            <person name="Kalush F."/>
            <person name="Karpen G.H."/>
            <person name="Ke Z."/>
            <person name="Kennison J.A."/>
            <person name="Ketchum K.A."/>
            <person name="Kimmel B.E."/>
            <person name="Kodira C.D."/>
            <person name="Kraft C.L."/>
            <person name="Kravitz S."/>
            <person name="Kulp D."/>
            <person name="Lai Z."/>
            <person name="Lasko P."/>
            <person name="Lei Y."/>
            <person name="Levitsky A.A."/>
            <person name="Li J.H."/>
            <person name="Li Z."/>
            <person name="Liang Y."/>
            <person name="Lin X."/>
            <person name="Liu X."/>
            <person name="Mattei B."/>
            <person name="McIntosh T.C."/>
            <person name="McLeod M.P."/>
            <person name="McPherson D."/>
            <person name="Merkulov G."/>
            <person name="Milshina N.V."/>
            <person name="Mobarry C."/>
            <person name="Morris J."/>
            <person name="Moshrefi A."/>
            <person name="Mount S.M."/>
            <person name="Moy M."/>
            <person name="Murphy B."/>
            <person name="Murphy L."/>
            <person name="Muzny D.M."/>
            <person name="Nelson D.L."/>
            <person name="Nelson D.R."/>
            <person name="Nelson K.A."/>
            <person name="Nixon K."/>
            <person name="Nusskern D.R."/>
            <person name="Pacleb J.M."/>
            <person name="Palazzolo M."/>
            <person name="Pittman G.S."/>
            <person name="Pan S."/>
            <person name="Pollard J."/>
            <person name="Puri V."/>
            <person name="Reese M.G."/>
            <person name="Reinert K."/>
            <person name="Remington K."/>
            <person name="Saunders R.D.C."/>
            <person name="Scheeler F."/>
            <person name="Shen H."/>
            <person name="Shue B.C."/>
            <person name="Siden-Kiamos I."/>
            <person name="Simpson M."/>
            <person name="Skupski M.P."/>
            <person name="Smith T.J."/>
            <person name="Spier E."/>
            <person name="Spradling A.C."/>
            <person name="Stapleton M."/>
            <person name="Strong R."/>
            <person name="Sun E."/>
            <person name="Svirskas R."/>
            <person name="Tector C."/>
            <person name="Turner R."/>
            <person name="Venter E."/>
            <person name="Wang A.H."/>
            <person name="Wang X."/>
            <person name="Wang Z.-Y."/>
            <person name="Wassarman D.A."/>
            <person name="Weinstock G.M."/>
            <person name="Weissenbach J."/>
            <person name="Williams S.M."/>
            <person name="Woodage T."/>
            <person name="Worley K.C."/>
            <person name="Wu D."/>
            <person name="Yang S."/>
            <person name="Yao Q.A."/>
            <person name="Ye J."/>
            <person name="Yeh R.-F."/>
            <person name="Zaveri J.S."/>
            <person name="Zhan M."/>
            <person name="Zhang G."/>
            <person name="Zhao Q."/>
            <person name="Zheng L."/>
            <person name="Zheng X.H."/>
            <person name="Zhong F.N."/>
            <person name="Zhong W."/>
            <person name="Zhou X."/>
            <person name="Zhu S.C."/>
            <person name="Zhu X."/>
            <person name="Smith H.O."/>
            <person name="Gibbs R.A."/>
            <person name="Myers E.W."/>
            <person name="Rubin G.M."/>
            <person name="Venter J.C."/>
        </authorList>
    </citation>
    <scope>NUCLEOTIDE SEQUENCE [LARGE SCALE GENOMIC DNA]</scope>
    <source>
        <strain evidence="3">Berkeley</strain>
    </source>
</reference>
<reference evidence="7" key="3">
    <citation type="journal article" date="2002" name="Genome Biol.">
        <title>Annotation of the Drosophila melanogaster euchromatic genome: a systematic review.</title>
        <authorList>
            <person name="Misra S."/>
            <person name="Crosby M.A."/>
            <person name="Mungall C.J."/>
            <person name="Matthews B.B."/>
            <person name="Campbell K.S."/>
            <person name="Hradecky P."/>
            <person name="Huang Y."/>
            <person name="Kaminker J.S."/>
            <person name="Millburn G.H."/>
            <person name="Prochnik S.E."/>
            <person name="Smith C.D."/>
            <person name="Tupy J.L."/>
            <person name="Whitfield E.J."/>
            <person name="Bayraktaroglu L."/>
            <person name="Berman B.P."/>
            <person name="Bettencourt B.R."/>
            <person name="Celniker S.E."/>
            <person name="de Grey A.D.N.J."/>
            <person name="Drysdale R.A."/>
            <person name="Harris N.L."/>
            <person name="Richter J."/>
            <person name="Russo S."/>
            <person name="Schroeder A.J."/>
            <person name="Shu S.Q."/>
            <person name="Stapleton M."/>
            <person name="Yamada C."/>
            <person name="Ashburner M."/>
            <person name="Gelbart W.M."/>
            <person name="Rubin G.M."/>
            <person name="Lewis S.E."/>
        </authorList>
    </citation>
    <scope>GENOME REANNOTATION</scope>
    <source>
        <strain>Berkeley</strain>
    </source>
</reference>
<reference key="4">
    <citation type="submission" date="2005-03" db="EMBL/GenBank/DDBJ databases">
        <authorList>
            <person name="Stapleton M."/>
            <person name="Carlson J.W."/>
            <person name="Chavez C."/>
            <person name="Frise E."/>
            <person name="George R.A."/>
            <person name="Pacleb J.M."/>
            <person name="Park S."/>
            <person name="Wan K.H."/>
            <person name="Yu C."/>
            <person name="Rubin G.M."/>
            <person name="Celniker S.E."/>
        </authorList>
    </citation>
    <scope>NUCLEOTIDE SEQUENCE [LARGE SCALE MRNA]</scope>
    <source>
        <strain>Berkeley</strain>
        <tissue>Embryo</tissue>
    </source>
</reference>
<reference evidence="7" key="5">
    <citation type="journal article" date="2002" name="Genome Biol.">
        <title>A Drosophila full-length cDNA resource.</title>
        <authorList>
            <person name="Stapleton M."/>
            <person name="Carlson J.W."/>
            <person name="Brokstein P."/>
            <person name="Yu C."/>
            <person name="Champe M."/>
            <person name="George R.A."/>
            <person name="Guarin H."/>
            <person name="Kronmiller B."/>
            <person name="Pacleb J.M."/>
            <person name="Park S."/>
            <person name="Wan K.H."/>
            <person name="Rubin G.M."/>
            <person name="Celniker S.E."/>
        </authorList>
    </citation>
    <scope>NUCLEOTIDE SEQUENCE [LARGE SCALE MRNA] OF 3-599</scope>
    <source>
        <strain evidence="4">Berkeley</strain>
        <tissue evidence="4">Embryo</tissue>
    </source>
</reference>
<reference key="6">
    <citation type="journal article" date="2007" name="Mol. Biosyst.">
        <title>An integrated chemical, mass spectrometric and computational strategy for (quantitative) phosphoproteomics: application to Drosophila melanogaster Kc167 cells.</title>
        <authorList>
            <person name="Bodenmiller B."/>
            <person name="Mueller L.N."/>
            <person name="Pedrioli P.G.A."/>
            <person name="Pflieger D."/>
            <person name="Juenger M.A."/>
            <person name="Eng J.K."/>
            <person name="Aebersold R."/>
            <person name="Tao W.A."/>
        </authorList>
    </citation>
    <scope>PHOSPHORYLATION [LARGE SCALE ANALYSIS] AT SER-411</scope>
    <scope>IDENTIFICATION BY MASS SPECTROMETRY</scope>
</reference>
<proteinExistence type="evidence at protein level"/>
<protein>
    <recommendedName>
        <fullName>RING finger protein unkempt</fullName>
    </recommendedName>
</protein>
<gene>
    <name type="primary">unk</name>
    <name type="ORF">CG4620</name>
</gene>